<protein>
    <recommendedName>
        <fullName evidence="6">ADP-ribose glycohydrolase AF_1521</fullName>
    </recommendedName>
    <alternativeName>
        <fullName evidence="6">[Protein ADP-ribosylaspartate] hydrolase AF_1521</fullName>
        <ecNumber evidence="4">3.2.2.-</ecNumber>
    </alternativeName>
    <alternativeName>
        <fullName evidence="6">[Protein ADP-ribosylglutamate] hydrolase AF_1521</fullName>
        <ecNumber evidence="3 4">3.2.2.-</ecNumber>
    </alternativeName>
</protein>
<keyword id="KW-0002">3D-structure</keyword>
<keyword id="KW-0378">Hydrolase</keyword>
<keyword id="KW-1185">Reference proteome</keyword>
<evidence type="ECO:0000255" key="1">
    <source>
        <dbReference type="PROSITE-ProRule" id="PRU00490"/>
    </source>
</evidence>
<evidence type="ECO:0000269" key="2">
    <source>
    </source>
</evidence>
<evidence type="ECO:0000269" key="3">
    <source>
    </source>
</evidence>
<evidence type="ECO:0000269" key="4">
    <source>
    </source>
</evidence>
<evidence type="ECO:0000269" key="5">
    <source>
    </source>
</evidence>
<evidence type="ECO:0000305" key="6"/>
<evidence type="ECO:0007829" key="7">
    <source>
        <dbReference type="PDB" id="1VHU"/>
    </source>
</evidence>
<sequence>MEVLFEAKVGDITLKLAQGDITQYPAKAIVNAANKRLEHGGGVAYAIAKACAGDAGLYTEISKKAMREQFGRDYIDHGEVVVTPAMNLEERGIKYVFHTVGPICSGMWSEELKEKLYKAFLGPLEKAEEMGVESIAFPAVSAGIYGCDLEKVVETFLEAVKNFKGSAVKEVALVIYDRKSAEVALKVFERSL</sequence>
<organism>
    <name type="scientific">Archaeoglobus fulgidus (strain ATCC 49558 / DSM 4304 / JCM 9628 / NBRC 100126 / VC-16)</name>
    <dbReference type="NCBI Taxonomy" id="224325"/>
    <lineage>
        <taxon>Archaea</taxon>
        <taxon>Methanobacteriati</taxon>
        <taxon>Methanobacteriota</taxon>
        <taxon>Archaeoglobi</taxon>
        <taxon>Archaeoglobales</taxon>
        <taxon>Archaeoglobaceae</taxon>
        <taxon>Archaeoglobus</taxon>
    </lineage>
</organism>
<proteinExistence type="evidence at protein level"/>
<feature type="chain" id="PRO_0000089227" description="ADP-ribose glycohydrolase AF_1521">
    <location>
        <begin position="1"/>
        <end position="192"/>
    </location>
</feature>
<feature type="domain" description="Macro" evidence="1">
    <location>
        <begin position="1"/>
        <end position="192"/>
    </location>
</feature>
<feature type="binding site" evidence="2">
    <location>
        <begin position="19"/>
        <end position="21"/>
    </location>
    <ligand>
        <name>substrate</name>
    </ligand>
</feature>
<feature type="binding site" evidence="2">
    <location>
        <begin position="32"/>
        <end position="34"/>
    </location>
    <ligand>
        <name>substrate</name>
    </ligand>
</feature>
<feature type="binding site" evidence="2">
    <location>
        <begin position="39"/>
        <end position="44"/>
    </location>
    <ligand>
        <name>substrate</name>
    </ligand>
</feature>
<feature type="binding site" evidence="2">
    <location>
        <begin position="140"/>
        <end position="146"/>
    </location>
    <ligand>
        <name>substrate</name>
    </ligand>
</feature>
<feature type="mutagenesis site" description="Strongly reduced affinity for ADP-ribose." evidence="2">
    <original>D</original>
    <variation>A</variation>
    <location>
        <position position="20"/>
    </location>
</feature>
<feature type="mutagenesis site" description="Abolishes hydrolase activity." evidence="5">
    <original>G</original>
    <variation>D</variation>
    <location>
        <position position="41"/>
    </location>
</feature>
<feature type="mutagenesis site" description="Abolishes hydrolase activity." evidence="5">
    <original>G</original>
    <variation>D</variation>
    <location>
        <position position="42"/>
    </location>
</feature>
<feature type="strand" evidence="7">
    <location>
        <begin position="2"/>
        <end position="9"/>
    </location>
</feature>
<feature type="strand" evidence="7">
    <location>
        <begin position="12"/>
        <end position="19"/>
    </location>
</feature>
<feature type="helix" evidence="7">
    <location>
        <begin position="21"/>
        <end position="23"/>
    </location>
</feature>
<feature type="strand" evidence="7">
    <location>
        <begin position="27"/>
        <end position="33"/>
    </location>
</feature>
<feature type="helix" evidence="7">
    <location>
        <begin position="42"/>
        <end position="52"/>
    </location>
</feature>
<feature type="helix" evidence="7">
    <location>
        <begin position="55"/>
        <end position="70"/>
    </location>
</feature>
<feature type="strand" evidence="7">
    <location>
        <begin position="71"/>
        <end position="73"/>
    </location>
</feature>
<feature type="strand" evidence="7">
    <location>
        <begin position="81"/>
        <end position="84"/>
    </location>
</feature>
<feature type="helix" evidence="7">
    <location>
        <begin position="86"/>
        <end position="91"/>
    </location>
</feature>
<feature type="strand" evidence="7">
    <location>
        <begin position="95"/>
        <end position="100"/>
    </location>
</feature>
<feature type="helix" evidence="7">
    <location>
        <begin position="110"/>
        <end position="130"/>
    </location>
</feature>
<feature type="strand" evidence="7">
    <location>
        <begin position="134"/>
        <end position="137"/>
    </location>
</feature>
<feature type="helix" evidence="7">
    <location>
        <begin position="149"/>
        <end position="162"/>
    </location>
</feature>
<feature type="strand" evidence="7">
    <location>
        <begin position="170"/>
        <end position="177"/>
    </location>
</feature>
<feature type="helix" evidence="7">
    <location>
        <begin position="178"/>
        <end position="191"/>
    </location>
</feature>
<comment type="function">
    <text evidence="2 3 4">Removes ADP-ribose from aspartate and glutamate residues in proteins bearing a single ADP-ribose moiety (PubMed:23474712, PubMed:23474714). Inactive towards proteins bearing poly-ADP-ribose (PubMed:23474712, PubMed:23474714). Catalyzes removal of a phosphate group from ADP-ribose 1''-phosphate (Appr1p), but with low efficiency (PubMed:15902274).</text>
</comment>
<comment type="catalytic activity">
    <reaction evidence="3 4">
        <text>5-O-(ADP-D-ribosyl)-L-glutamyl-[protein] + H2O = L-glutamyl-[protein] + ADP-D-ribose + H(+)</text>
        <dbReference type="Rhea" id="RHEA:58248"/>
        <dbReference type="Rhea" id="RHEA-COMP:10208"/>
        <dbReference type="Rhea" id="RHEA-COMP:15089"/>
        <dbReference type="ChEBI" id="CHEBI:15377"/>
        <dbReference type="ChEBI" id="CHEBI:15378"/>
        <dbReference type="ChEBI" id="CHEBI:29973"/>
        <dbReference type="ChEBI" id="CHEBI:57967"/>
        <dbReference type="ChEBI" id="CHEBI:142540"/>
    </reaction>
    <physiologicalReaction direction="left-to-right" evidence="3 4">
        <dbReference type="Rhea" id="RHEA:58249"/>
    </physiologicalReaction>
</comment>
<comment type="catalytic activity">
    <reaction evidence="4">
        <text>4-O-(ADP-D-ribosyl)-L-aspartyl-[protein] + H2O = L-aspartyl-[protein] + ADP-D-ribose + H(+)</text>
        <dbReference type="Rhea" id="RHEA:54428"/>
        <dbReference type="Rhea" id="RHEA-COMP:9867"/>
        <dbReference type="Rhea" id="RHEA-COMP:13832"/>
        <dbReference type="ChEBI" id="CHEBI:15377"/>
        <dbReference type="ChEBI" id="CHEBI:15378"/>
        <dbReference type="ChEBI" id="CHEBI:29961"/>
        <dbReference type="ChEBI" id="CHEBI:57967"/>
        <dbReference type="ChEBI" id="CHEBI:138102"/>
    </reaction>
    <physiologicalReaction direction="left-to-right" evidence="4">
        <dbReference type="Rhea" id="RHEA:54429"/>
    </physiologicalReaction>
</comment>
<comment type="catalytic activity">
    <reaction evidence="5">
        <text>alpha-NAD(+) + H2O = ADP-D-ribose + nicotinamide + H(+)</text>
        <dbReference type="Rhea" id="RHEA:68792"/>
        <dbReference type="ChEBI" id="CHEBI:15377"/>
        <dbReference type="ChEBI" id="CHEBI:15378"/>
        <dbReference type="ChEBI" id="CHEBI:17154"/>
        <dbReference type="ChEBI" id="CHEBI:57967"/>
        <dbReference type="ChEBI" id="CHEBI:77017"/>
    </reaction>
</comment>
<comment type="sequence caution" evidence="6">
    <conflict type="erroneous initiation">
        <sequence resource="EMBL-CDS" id="AAB89725"/>
    </conflict>
</comment>
<dbReference type="EC" id="3.2.2.-" evidence="4 3"/>
<dbReference type="EMBL" id="AE000782">
    <property type="protein sequence ID" value="AAB89725.1"/>
    <property type="status" value="ALT_INIT"/>
    <property type="molecule type" value="Genomic_DNA"/>
</dbReference>
<dbReference type="PIR" id="H69439">
    <property type="entry name" value="H69439"/>
</dbReference>
<dbReference type="RefSeq" id="WP_048064404.1">
    <property type="nucleotide sequence ID" value="NC_000917.1"/>
</dbReference>
<dbReference type="PDB" id="1HJZ">
    <property type="method" value="X-ray"/>
    <property type="resolution" value="1.70 A"/>
    <property type="chains" value="A/B=1-192"/>
</dbReference>
<dbReference type="PDB" id="1VHU">
    <property type="method" value="X-ray"/>
    <property type="resolution" value="1.34 A"/>
    <property type="chains" value="A=1-192"/>
</dbReference>
<dbReference type="PDB" id="2BFQ">
    <property type="method" value="X-ray"/>
    <property type="resolution" value="1.50 A"/>
    <property type="chains" value="A=1-192"/>
</dbReference>
<dbReference type="PDB" id="2BFR">
    <property type="method" value="X-ray"/>
    <property type="resolution" value="2.50 A"/>
    <property type="chains" value="A=1-192"/>
</dbReference>
<dbReference type="PDB" id="6FX7">
    <property type="method" value="X-ray"/>
    <property type="resolution" value="1.82 A"/>
    <property type="chains" value="A=1-192"/>
</dbReference>
<dbReference type="PDB" id="7WR6">
    <property type="method" value="X-ray"/>
    <property type="resolution" value="1.96 A"/>
    <property type="chains" value="B=1-192"/>
</dbReference>
<dbReference type="PDBsum" id="1HJZ"/>
<dbReference type="PDBsum" id="1VHU"/>
<dbReference type="PDBsum" id="2BFQ"/>
<dbReference type="PDBsum" id="2BFR"/>
<dbReference type="PDBsum" id="6FX7"/>
<dbReference type="PDBsum" id="7WR6"/>
<dbReference type="SMR" id="O28751"/>
<dbReference type="STRING" id="224325.AF_1521"/>
<dbReference type="PaxDb" id="224325-AF_1521"/>
<dbReference type="DNASU" id="1484749"/>
<dbReference type="EnsemblBacteria" id="AAB89725">
    <property type="protein sequence ID" value="AAB89725"/>
    <property type="gene ID" value="AF_1521"/>
</dbReference>
<dbReference type="KEGG" id="afu:AF_1521"/>
<dbReference type="eggNOG" id="arCOG04225">
    <property type="taxonomic scope" value="Archaea"/>
</dbReference>
<dbReference type="HOGENOM" id="CLU_046550_5_1_2"/>
<dbReference type="PhylomeDB" id="O28751"/>
<dbReference type="EvolutionaryTrace" id="O28751"/>
<dbReference type="Proteomes" id="UP000002199">
    <property type="component" value="Chromosome"/>
</dbReference>
<dbReference type="GO" id="GO:0140293">
    <property type="term" value="F:ADP-ribosylglutamate hydrolase activity"/>
    <property type="evidence" value="ECO:0000314"/>
    <property type="project" value="UniProtKB"/>
</dbReference>
<dbReference type="GO" id="GO:0140291">
    <property type="term" value="P:peptidyl-glutamate ADP-deribosylation"/>
    <property type="evidence" value="ECO:0000314"/>
    <property type="project" value="UniProtKB"/>
</dbReference>
<dbReference type="CDD" id="cd02907">
    <property type="entry name" value="Macro_Af1521_BAL-like"/>
    <property type="match status" value="1"/>
</dbReference>
<dbReference type="FunFam" id="3.40.220.10:FF:000030">
    <property type="entry name" value="ADP-ribose glycohydrolase AF_1521"/>
    <property type="match status" value="1"/>
</dbReference>
<dbReference type="Gene3D" id="3.40.220.10">
    <property type="entry name" value="Leucine Aminopeptidase, subunit E, domain 1"/>
    <property type="match status" value="1"/>
</dbReference>
<dbReference type="InterPro" id="IPR002589">
    <property type="entry name" value="Macro_dom"/>
</dbReference>
<dbReference type="InterPro" id="IPR043472">
    <property type="entry name" value="Macro_dom-like"/>
</dbReference>
<dbReference type="NCBIfam" id="NF001662">
    <property type="entry name" value="PRK00431.1-3"/>
    <property type="match status" value="1"/>
</dbReference>
<dbReference type="PANTHER" id="PTHR11106">
    <property type="entry name" value="GANGLIOSIDE INDUCED DIFFERENTIATION ASSOCIATED PROTEIN 2-RELATED"/>
    <property type="match status" value="1"/>
</dbReference>
<dbReference type="PANTHER" id="PTHR11106:SF27">
    <property type="entry name" value="MACRO DOMAIN-CONTAINING PROTEIN"/>
    <property type="match status" value="1"/>
</dbReference>
<dbReference type="Pfam" id="PF01661">
    <property type="entry name" value="Macro"/>
    <property type="match status" value="1"/>
</dbReference>
<dbReference type="SMART" id="SM00506">
    <property type="entry name" value="A1pp"/>
    <property type="match status" value="1"/>
</dbReference>
<dbReference type="SUPFAM" id="SSF52949">
    <property type="entry name" value="Macro domain-like"/>
    <property type="match status" value="1"/>
</dbReference>
<dbReference type="PROSITE" id="PS51154">
    <property type="entry name" value="MACRO"/>
    <property type="match status" value="1"/>
</dbReference>
<gene>
    <name type="ordered locus">AF_1521</name>
</gene>
<accession>O28751</accession>
<reference key="1">
    <citation type="journal article" date="1997" name="Nature">
        <title>The complete genome sequence of the hyperthermophilic, sulphate-reducing archaeon Archaeoglobus fulgidus.</title>
        <authorList>
            <person name="Klenk H.-P."/>
            <person name="Clayton R.A."/>
            <person name="Tomb J.-F."/>
            <person name="White O."/>
            <person name="Nelson K.E."/>
            <person name="Ketchum K.A."/>
            <person name="Dodson R.J."/>
            <person name="Gwinn M.L."/>
            <person name="Hickey E.K."/>
            <person name="Peterson J.D."/>
            <person name="Richardson D.L."/>
            <person name="Kerlavage A.R."/>
            <person name="Graham D.E."/>
            <person name="Kyrpides N.C."/>
            <person name="Fleischmann R.D."/>
            <person name="Quackenbush J."/>
            <person name="Lee N.H."/>
            <person name="Sutton G.G."/>
            <person name="Gill S.R."/>
            <person name="Kirkness E.F."/>
            <person name="Dougherty B.A."/>
            <person name="McKenney K."/>
            <person name="Adams M.D."/>
            <person name="Loftus B.J."/>
            <person name="Peterson S.N."/>
            <person name="Reich C.I."/>
            <person name="McNeil L.K."/>
            <person name="Badger J.H."/>
            <person name="Glodek A."/>
            <person name="Zhou L."/>
            <person name="Overbeek R."/>
            <person name="Gocayne J.D."/>
            <person name="Weidman J.F."/>
            <person name="McDonald L.A."/>
            <person name="Utterback T.R."/>
            <person name="Cotton M.D."/>
            <person name="Spriggs T."/>
            <person name="Artiach P."/>
            <person name="Kaine B.P."/>
            <person name="Sykes S.M."/>
            <person name="Sadow P.W."/>
            <person name="D'Andrea K.P."/>
            <person name="Bowman C."/>
            <person name="Fujii C."/>
            <person name="Garland S.A."/>
            <person name="Mason T.M."/>
            <person name="Olsen G.J."/>
            <person name="Fraser C.M."/>
            <person name="Smith H.O."/>
            <person name="Woese C.R."/>
            <person name="Venter J.C."/>
        </authorList>
    </citation>
    <scope>NUCLEOTIDE SEQUENCE [LARGE SCALE GENOMIC DNA]</scope>
    <source>
        <strain>ATCC 49558 / DSM 4304 / JCM 9628 / NBRC 100126 / VC-16</strain>
    </source>
</reference>
<reference key="2">
    <citation type="journal article" date="2013" name="Nat. Struct. Mol. Biol.">
        <title>Macrodomain-containing proteins are new mono-ADP-ribosylhydrolases.</title>
        <authorList>
            <person name="Rosenthal F."/>
            <person name="Feijs K.L."/>
            <person name="Frugier E."/>
            <person name="Bonalli M."/>
            <person name="Forst A.H."/>
            <person name="Imhof R."/>
            <person name="Winkler H.C."/>
            <person name="Fischer D."/>
            <person name="Caflisch A."/>
            <person name="Hassa P.O."/>
            <person name="Luescher B."/>
            <person name="Hottiger M.O."/>
        </authorList>
    </citation>
    <scope>FUNCTION</scope>
    <scope>CATALYTIC ACTIVITY</scope>
</reference>
<reference key="3">
    <citation type="journal article" date="2013" name="Nat. Struct. Mol. Biol.">
        <title>A family of macrodomain proteins reverses cellular mono-ADP-ribosylation.</title>
        <authorList>
            <person name="Jankevicius G."/>
            <person name="Hassler M."/>
            <person name="Golia B."/>
            <person name="Rybin V."/>
            <person name="Zacharias M."/>
            <person name="Timinszky G."/>
            <person name="Ladurner A.G."/>
        </authorList>
    </citation>
    <scope>FUNCTION</scope>
</reference>
<reference key="4">
    <citation type="journal article" date="2019" name="ACS Chem. Biol.">
        <title>The ARH and Macrodomain Families of alpha-ADP-ribose-acceptor Hydrolases Catalyze alpha-NAD+ Hydrolysis.</title>
        <authorList>
            <person name="Stevens L.A."/>
            <person name="Kato J."/>
            <person name="Kasamatsu A."/>
            <person name="Oda H."/>
            <person name="Lee D.Y."/>
            <person name="Moss J."/>
        </authorList>
    </citation>
    <scope>CATALYTIC ACTIVITY</scope>
    <scope>MUTAGENESIS OF GLY-41 AND GLY-42</scope>
</reference>
<reference key="5">
    <citation type="journal article" date="2003" name="J. Mol. Biol.">
        <title>The crystal structure of AF1521 a protein from Archaeoglobus fulgidus with homology to the non-histone domain of macroH2A.</title>
        <authorList>
            <person name="Allen M.D."/>
            <person name="Buckle A.M."/>
            <person name="Cordell S.C."/>
            <person name="Lowe J."/>
            <person name="Bycroft M."/>
        </authorList>
    </citation>
    <scope>X-RAY CRYSTALLOGRAPHY (1.7 ANGSTROMS)</scope>
</reference>
<reference key="6">
    <citation type="journal article" date="2005" name="EMBO J.">
        <title>The macro domain is an ADP-ribose binding module.</title>
        <authorList>
            <person name="Karras G.I."/>
            <person name="Kustatscher G."/>
            <person name="Buhecha H.R."/>
            <person name="Allen M.D."/>
            <person name="Pugieux C."/>
            <person name="Sait F."/>
            <person name="Bycroft M."/>
            <person name="Ladurner A.G."/>
        </authorList>
    </citation>
    <scope>X-RAY CRYSTALLOGRAPHY (1.5 ANGSTROMS) IN COMPLEX WITH ADP-RIBOSE</scope>
    <scope>FUNCTION</scope>
    <scope>MUTAGENESIS OF ASP-20</scope>
</reference>
<reference key="7">
    <citation type="journal article" date="2005" name="Proteins">
        <title>Structural analysis of a set of proteins resulting from a bacterial genomics project.</title>
        <authorList>
            <person name="Badger J."/>
            <person name="Sauder J.M."/>
            <person name="Adams J.M."/>
            <person name="Antonysamy S."/>
            <person name="Bain K."/>
            <person name="Bergseid M.G."/>
            <person name="Buchanan S.G."/>
            <person name="Buchanan M.D."/>
            <person name="Batiyenko Y."/>
            <person name="Christopher J.A."/>
            <person name="Emtage S."/>
            <person name="Eroshkina A."/>
            <person name="Feil I."/>
            <person name="Furlong E.B."/>
            <person name="Gajiwala K.S."/>
            <person name="Gao X."/>
            <person name="He D."/>
            <person name="Hendle J."/>
            <person name="Huber A."/>
            <person name="Hoda K."/>
            <person name="Kearins P."/>
            <person name="Kissinger C."/>
            <person name="Laubert B."/>
            <person name="Lewis H.A."/>
            <person name="Lin J."/>
            <person name="Loomis K."/>
            <person name="Lorimer D."/>
            <person name="Louie G."/>
            <person name="Maletic M."/>
            <person name="Marsh C.D."/>
            <person name="Miller I."/>
            <person name="Molinari J."/>
            <person name="Muller-Dieckmann H.J."/>
            <person name="Newman J.M."/>
            <person name="Noland B.W."/>
            <person name="Pagarigan B."/>
            <person name="Park F."/>
            <person name="Peat T.S."/>
            <person name="Post K.W."/>
            <person name="Radojicic S."/>
            <person name="Ramos A."/>
            <person name="Romero R."/>
            <person name="Rutter M.E."/>
            <person name="Sanderson W.E."/>
            <person name="Schwinn K.D."/>
            <person name="Tresser J."/>
            <person name="Winhoven J."/>
            <person name="Wright T.A."/>
            <person name="Wu L."/>
            <person name="Xu J."/>
            <person name="Harris T.J.R."/>
        </authorList>
    </citation>
    <scope>X-RAY CRYSTALLOGRAPHY (1.34 ANGSTROMS)</scope>
</reference>
<name>Y1521_ARCFU</name>